<organism>
    <name type="scientific">Streptococcus gordonii (strain Challis / ATCC 35105 / BCRC 15272 / CH1 / DL1 / V288)</name>
    <dbReference type="NCBI Taxonomy" id="467705"/>
    <lineage>
        <taxon>Bacteria</taxon>
        <taxon>Bacillati</taxon>
        <taxon>Bacillota</taxon>
        <taxon>Bacilli</taxon>
        <taxon>Lactobacillales</taxon>
        <taxon>Streptococcaceae</taxon>
        <taxon>Streptococcus</taxon>
    </lineage>
</organism>
<name>RL32_STRGC</name>
<protein>
    <recommendedName>
        <fullName evidence="1">Large ribosomal subunit protein bL32</fullName>
    </recommendedName>
    <alternativeName>
        <fullName evidence="2">50S ribosomal protein L32</fullName>
    </alternativeName>
</protein>
<reference key="1">
    <citation type="journal article" date="2007" name="J. Bacteriol.">
        <title>Genome-wide transcriptional changes in Streptococcus gordonii in response to competence signaling peptide.</title>
        <authorList>
            <person name="Vickerman M.M."/>
            <person name="Iobst S."/>
            <person name="Jesionowski A.M."/>
            <person name="Gill S.R."/>
        </authorList>
    </citation>
    <scope>NUCLEOTIDE SEQUENCE [LARGE SCALE GENOMIC DNA]</scope>
    <source>
        <strain>Challis / ATCC 35105 / BCRC 15272 / CH1 / DL1 / V288</strain>
    </source>
</reference>
<evidence type="ECO:0000255" key="1">
    <source>
        <dbReference type="HAMAP-Rule" id="MF_00340"/>
    </source>
</evidence>
<evidence type="ECO:0000305" key="2"/>
<accession>A8AZV3</accession>
<comment type="similarity">
    <text evidence="1">Belongs to the bacterial ribosomal protein bL32 family.</text>
</comment>
<sequence length="60" mass="6743">MAVPARRTSKAKKNKRRTHYKVTAPSVTFDETTGDYSRSHRVSLKGYYKGRKIAKAAAAE</sequence>
<feature type="chain" id="PRO_1000079350" description="Large ribosomal subunit protein bL32">
    <location>
        <begin position="1"/>
        <end position="60"/>
    </location>
</feature>
<proteinExistence type="inferred from homology"/>
<dbReference type="EMBL" id="CP000725">
    <property type="protein sequence ID" value="ABV09500.1"/>
    <property type="molecule type" value="Genomic_DNA"/>
</dbReference>
<dbReference type="RefSeq" id="WP_008809991.1">
    <property type="nucleotide sequence ID" value="NC_009785.1"/>
</dbReference>
<dbReference type="SMR" id="A8AZV3"/>
<dbReference type="STRING" id="467705.SGO_2065"/>
<dbReference type="GeneID" id="93786763"/>
<dbReference type="KEGG" id="sgo:SGO_2065"/>
<dbReference type="eggNOG" id="COG0333">
    <property type="taxonomic scope" value="Bacteria"/>
</dbReference>
<dbReference type="HOGENOM" id="CLU_129084_2_3_9"/>
<dbReference type="Proteomes" id="UP000001131">
    <property type="component" value="Chromosome"/>
</dbReference>
<dbReference type="GO" id="GO:0015934">
    <property type="term" value="C:large ribosomal subunit"/>
    <property type="evidence" value="ECO:0007669"/>
    <property type="project" value="InterPro"/>
</dbReference>
<dbReference type="GO" id="GO:0003735">
    <property type="term" value="F:structural constituent of ribosome"/>
    <property type="evidence" value="ECO:0007669"/>
    <property type="project" value="InterPro"/>
</dbReference>
<dbReference type="GO" id="GO:0006412">
    <property type="term" value="P:translation"/>
    <property type="evidence" value="ECO:0007669"/>
    <property type="project" value="UniProtKB-UniRule"/>
</dbReference>
<dbReference type="HAMAP" id="MF_00340">
    <property type="entry name" value="Ribosomal_bL32"/>
    <property type="match status" value="1"/>
</dbReference>
<dbReference type="InterPro" id="IPR002677">
    <property type="entry name" value="Ribosomal_bL32"/>
</dbReference>
<dbReference type="InterPro" id="IPR044957">
    <property type="entry name" value="Ribosomal_bL32_bact"/>
</dbReference>
<dbReference type="InterPro" id="IPR011332">
    <property type="entry name" value="Ribosomal_zn-bd"/>
</dbReference>
<dbReference type="NCBIfam" id="TIGR01031">
    <property type="entry name" value="rpmF_bact"/>
    <property type="match status" value="1"/>
</dbReference>
<dbReference type="PANTHER" id="PTHR35534">
    <property type="entry name" value="50S RIBOSOMAL PROTEIN L32"/>
    <property type="match status" value="1"/>
</dbReference>
<dbReference type="PANTHER" id="PTHR35534:SF1">
    <property type="entry name" value="LARGE RIBOSOMAL SUBUNIT PROTEIN BL32"/>
    <property type="match status" value="1"/>
</dbReference>
<dbReference type="Pfam" id="PF01783">
    <property type="entry name" value="Ribosomal_L32p"/>
    <property type="match status" value="1"/>
</dbReference>
<dbReference type="SUPFAM" id="SSF57829">
    <property type="entry name" value="Zn-binding ribosomal proteins"/>
    <property type="match status" value="1"/>
</dbReference>
<gene>
    <name evidence="1" type="primary">rpmF</name>
    <name type="ordered locus">SGO_2065</name>
</gene>
<keyword id="KW-1185">Reference proteome</keyword>
<keyword id="KW-0687">Ribonucleoprotein</keyword>
<keyword id="KW-0689">Ribosomal protein</keyword>